<dbReference type="EMBL" id="HE600983">
    <property type="protein sequence ID" value="CAP33002.1"/>
    <property type="molecule type" value="Genomic_DNA"/>
</dbReference>
<dbReference type="SMR" id="A8XK26"/>
<dbReference type="FunCoup" id="A8XK26">
    <property type="interactions" value="2416"/>
</dbReference>
<dbReference type="STRING" id="6238.A8XK26"/>
<dbReference type="EnsemblMetazoa" id="CBG14500.1">
    <property type="protein sequence ID" value="CBG14500.1"/>
    <property type="gene ID" value="WBGene00034972"/>
</dbReference>
<dbReference type="KEGG" id="cbr:CBG_14500"/>
<dbReference type="CTD" id="8586559"/>
<dbReference type="WormBase" id="CBG14500">
    <property type="protein sequence ID" value="CBP18052"/>
    <property type="gene ID" value="WBGene00034972"/>
    <property type="gene designation" value="Cbr-lnp-1"/>
</dbReference>
<dbReference type="eggNOG" id="KOG2846">
    <property type="taxonomic scope" value="Eukaryota"/>
</dbReference>
<dbReference type="HOGENOM" id="CLU_797505_0_0_1"/>
<dbReference type="InParanoid" id="A8XK26"/>
<dbReference type="OMA" id="YAYDGNE"/>
<dbReference type="Proteomes" id="UP000008549">
    <property type="component" value="Unassembled WGS sequence"/>
</dbReference>
<dbReference type="GO" id="GO:0005789">
    <property type="term" value="C:endoplasmic reticulum membrane"/>
    <property type="evidence" value="ECO:0007669"/>
    <property type="project" value="UniProtKB-SubCell"/>
</dbReference>
<dbReference type="GO" id="GO:0071782">
    <property type="term" value="C:endoplasmic reticulum tubular network"/>
    <property type="evidence" value="ECO:0000318"/>
    <property type="project" value="GO_Central"/>
</dbReference>
<dbReference type="GO" id="GO:0016020">
    <property type="term" value="C:membrane"/>
    <property type="evidence" value="ECO:0000250"/>
    <property type="project" value="UniProtKB"/>
</dbReference>
<dbReference type="GO" id="GO:0045202">
    <property type="term" value="C:synapse"/>
    <property type="evidence" value="ECO:0007669"/>
    <property type="project" value="GOC"/>
</dbReference>
<dbReference type="GO" id="GO:0008270">
    <property type="term" value="F:zinc ion binding"/>
    <property type="evidence" value="ECO:0007669"/>
    <property type="project" value="UniProtKB-KW"/>
</dbReference>
<dbReference type="GO" id="GO:0007268">
    <property type="term" value="P:chemical synaptic transmission"/>
    <property type="evidence" value="ECO:0000250"/>
    <property type="project" value="UniProtKB"/>
</dbReference>
<dbReference type="GO" id="GO:0071786">
    <property type="term" value="P:endoplasmic reticulum tubular network organization"/>
    <property type="evidence" value="ECO:0000318"/>
    <property type="project" value="GO_Central"/>
</dbReference>
<dbReference type="GO" id="GO:0032880">
    <property type="term" value="P:regulation of protein localization"/>
    <property type="evidence" value="ECO:0000250"/>
    <property type="project" value="UniProtKB"/>
</dbReference>
<dbReference type="GO" id="GO:0007416">
    <property type="term" value="P:synapse assembly"/>
    <property type="evidence" value="ECO:0000250"/>
    <property type="project" value="UniProtKB"/>
</dbReference>
<dbReference type="InterPro" id="IPR040115">
    <property type="entry name" value="Lnp"/>
</dbReference>
<dbReference type="InterPro" id="IPR019273">
    <property type="entry name" value="Lunapark_Znf"/>
</dbReference>
<dbReference type="PANTHER" id="PTHR22166">
    <property type="entry name" value="ENDOPLASMIC RETICULUM JUNCTION FORMATION PROTEIN LUNAPARK"/>
    <property type="match status" value="1"/>
</dbReference>
<dbReference type="PANTHER" id="PTHR22166:SF12">
    <property type="entry name" value="ENDOPLASMIC RETICULUM JUNCTION FORMATION PROTEIN LUNAPARK"/>
    <property type="match status" value="1"/>
</dbReference>
<dbReference type="Pfam" id="PF10058">
    <property type="entry name" value="Zn_ribbon_10"/>
    <property type="match status" value="1"/>
</dbReference>
<proteinExistence type="inferred from homology"/>
<evidence type="ECO:0000250" key="1"/>
<evidence type="ECO:0000250" key="2">
    <source>
        <dbReference type="UniProtKB" id="Q17667"/>
    </source>
</evidence>
<evidence type="ECO:0000250" key="3">
    <source>
        <dbReference type="UniProtKB" id="Q9C0E8"/>
    </source>
</evidence>
<evidence type="ECO:0000255" key="4"/>
<evidence type="ECO:0000256" key="5">
    <source>
        <dbReference type="SAM" id="MobiDB-lite"/>
    </source>
</evidence>
<evidence type="ECO:0000305" key="6"/>
<evidence type="ECO:0000312" key="7">
    <source>
        <dbReference type="EMBL" id="CAP33002.1"/>
    </source>
</evidence>
<sequence length="344" mass="38549">MGNLFSRTKSPATELERVVLSIEDFKKRLQTISASNSSTLYYYYMGVIIILSIAMAHTWLRFDDPTKTYVACALVFGATVIVLTGRYIINCFFAWRTNRTTQKLENAITQKTVLLDLVKETLKFKEAKEILDRYEEKTEAGNTPTENSKLIHQQKQQNETLVSKTIMKPDQKRVETPVSQKPVPSKPGIAFDSMNMTPYQQRNSNATPVRPFLRQSTALDRILDYFMSDGPNCRNALICSICHTHNGMSVPAEYPFISFRCFECGHLNAAKKMGPHLPITRPPMGPKGIQHNGRAGPVPPKNQQPVVPMENPNPSTDLTPSASQHGSDSEPEKNADETAVVEKS</sequence>
<name>LNP1_CAEBR</name>
<feature type="chain" id="PRO_0000353201" description="Endoplasmic reticulum junction formation protein lunapark-1">
    <location>
        <begin position="1"/>
        <end position="344"/>
    </location>
</feature>
<feature type="topological domain" description="Cytoplasmic" evidence="1">
    <location>
        <begin position="1"/>
        <end position="39"/>
    </location>
</feature>
<feature type="transmembrane region" description="Helical" evidence="4">
    <location>
        <begin position="40"/>
        <end position="60"/>
    </location>
</feature>
<feature type="topological domain" description="Lumenal" evidence="1">
    <location>
        <begin position="61"/>
        <end position="68"/>
    </location>
</feature>
<feature type="transmembrane region" description="Helical" evidence="4">
    <location>
        <begin position="69"/>
        <end position="89"/>
    </location>
</feature>
<feature type="topological domain" description="Cytoplasmic" evidence="1">
    <location>
        <begin position="90"/>
        <end position="344"/>
    </location>
</feature>
<feature type="zinc finger region" description="C4-type; plays a role in ER morphology" evidence="1">
    <location>
        <begin position="239"/>
        <end position="264"/>
    </location>
</feature>
<feature type="region of interest" description="Disordered" evidence="5">
    <location>
        <begin position="136"/>
        <end position="155"/>
    </location>
</feature>
<feature type="region of interest" description="Disordered" evidence="5">
    <location>
        <begin position="171"/>
        <end position="192"/>
    </location>
</feature>
<feature type="region of interest" description="Disordered" evidence="5">
    <location>
        <begin position="275"/>
        <end position="344"/>
    </location>
</feature>
<feature type="coiled-coil region" evidence="4">
    <location>
        <begin position="116"/>
        <end position="140"/>
    </location>
</feature>
<feature type="compositionally biased region" description="Polar residues" evidence="5">
    <location>
        <begin position="140"/>
        <end position="155"/>
    </location>
</feature>
<feature type="compositionally biased region" description="Polar residues" evidence="5">
    <location>
        <begin position="312"/>
        <end position="326"/>
    </location>
</feature>
<feature type="compositionally biased region" description="Basic and acidic residues" evidence="5">
    <location>
        <begin position="327"/>
        <end position="344"/>
    </location>
</feature>
<protein>
    <recommendedName>
        <fullName evidence="6">Endoplasmic reticulum junction formation protein lunapark-1</fullName>
    </recommendedName>
    <alternativeName>
        <fullName evidence="3">ER junction formation factor lunapark</fullName>
    </alternativeName>
</protein>
<reference evidence="7" key="1">
    <citation type="journal article" date="2003" name="PLoS Biol.">
        <title>The genome sequence of Caenorhabditis briggsae: a platform for comparative genomics.</title>
        <authorList>
            <person name="Stein L.D."/>
            <person name="Bao Z."/>
            <person name="Blasiar D."/>
            <person name="Blumenthal T."/>
            <person name="Brent M.R."/>
            <person name="Chen N."/>
            <person name="Chinwalla A."/>
            <person name="Clarke L."/>
            <person name="Clee C."/>
            <person name="Coghlan A."/>
            <person name="Coulson A."/>
            <person name="D'Eustachio P."/>
            <person name="Fitch D.H.A."/>
            <person name="Fulton L.A."/>
            <person name="Fulton R.E."/>
            <person name="Griffiths-Jones S."/>
            <person name="Harris T.W."/>
            <person name="Hillier L.W."/>
            <person name="Kamath R."/>
            <person name="Kuwabara P.E."/>
            <person name="Mardis E.R."/>
            <person name="Marra M.A."/>
            <person name="Miner T.L."/>
            <person name="Minx P."/>
            <person name="Mullikin J.C."/>
            <person name="Plumb R.W."/>
            <person name="Rogers J."/>
            <person name="Schein J.E."/>
            <person name="Sohrmann M."/>
            <person name="Spieth J."/>
            <person name="Stajich J.E."/>
            <person name="Wei C."/>
            <person name="Willey D."/>
            <person name="Wilson R.K."/>
            <person name="Durbin R.M."/>
            <person name="Waterston R.H."/>
        </authorList>
    </citation>
    <scope>NUCLEOTIDE SEQUENCE [LARGE SCALE GENOMIC DNA]</scope>
    <source>
        <strain evidence="7">AF16</strain>
    </source>
</reference>
<organism>
    <name type="scientific">Caenorhabditis briggsae</name>
    <dbReference type="NCBI Taxonomy" id="6238"/>
    <lineage>
        <taxon>Eukaryota</taxon>
        <taxon>Metazoa</taxon>
        <taxon>Ecdysozoa</taxon>
        <taxon>Nematoda</taxon>
        <taxon>Chromadorea</taxon>
        <taxon>Rhabditida</taxon>
        <taxon>Rhabditina</taxon>
        <taxon>Rhabditomorpha</taxon>
        <taxon>Rhabditoidea</taxon>
        <taxon>Rhabditidae</taxon>
        <taxon>Peloderinae</taxon>
        <taxon>Caenorhabditis</taxon>
    </lineage>
</organism>
<gene>
    <name evidence="7" type="primary">lnp-1</name>
    <name type="ORF">CBG14500</name>
</gene>
<comment type="function">
    <text evidence="1">Plays a role in tubular endoplasmic reticulum network formation and maintenance (By similarity). May be involved in central nervous system development. Has a presynaptic role in neurotransmission. Likely to operate in synaptogenesis by regulating vesicular transport or localization. Required for correct localization of rab-3 and snb-1 (By similarity).</text>
</comment>
<comment type="subcellular location">
    <subcellularLocation>
        <location evidence="1">Endoplasmic reticulum membrane</location>
        <topology evidence="2">Multi-pass membrane protein</topology>
    </subcellularLocation>
    <text evidence="1">Localizes to three-way ER tubule junctions.</text>
</comment>
<comment type="similarity">
    <text evidence="4">Belongs to the lunapark family.</text>
</comment>
<keyword id="KW-0175">Coiled coil</keyword>
<keyword id="KW-0256">Endoplasmic reticulum</keyword>
<keyword id="KW-0472">Membrane</keyword>
<keyword id="KW-0479">Metal-binding</keyword>
<keyword id="KW-1185">Reference proteome</keyword>
<keyword id="KW-0812">Transmembrane</keyword>
<keyword id="KW-1133">Transmembrane helix</keyword>
<keyword id="KW-0862">Zinc</keyword>
<keyword id="KW-0863">Zinc-finger</keyword>
<accession>A8XK26</accession>